<protein>
    <recommendedName>
        <fullName evidence="1">Biosynthetic peptidoglycan transglycosylase</fullName>
        <ecNumber evidence="1">2.4.99.28</ecNumber>
    </recommendedName>
    <alternativeName>
        <fullName evidence="1">Glycan polymerase</fullName>
    </alternativeName>
    <alternativeName>
        <fullName evidence="1">Peptidoglycan glycosyltransferase MtgA</fullName>
        <shortName evidence="1">PGT</shortName>
    </alternativeName>
</protein>
<organism>
    <name type="scientific">Salmonella typhimurium (strain LT2 / SGSC1412 / ATCC 700720)</name>
    <dbReference type="NCBI Taxonomy" id="99287"/>
    <lineage>
        <taxon>Bacteria</taxon>
        <taxon>Pseudomonadati</taxon>
        <taxon>Pseudomonadota</taxon>
        <taxon>Gammaproteobacteria</taxon>
        <taxon>Enterobacterales</taxon>
        <taxon>Enterobacteriaceae</taxon>
        <taxon>Salmonella</taxon>
    </lineage>
</organism>
<reference key="1">
    <citation type="journal article" date="2001" name="Nature">
        <title>Complete genome sequence of Salmonella enterica serovar Typhimurium LT2.</title>
        <authorList>
            <person name="McClelland M."/>
            <person name="Sanderson K.E."/>
            <person name="Spieth J."/>
            <person name="Clifton S.W."/>
            <person name="Latreille P."/>
            <person name="Courtney L."/>
            <person name="Porwollik S."/>
            <person name="Ali J."/>
            <person name="Dante M."/>
            <person name="Du F."/>
            <person name="Hou S."/>
            <person name="Layman D."/>
            <person name="Leonard S."/>
            <person name="Nguyen C."/>
            <person name="Scott K."/>
            <person name="Holmes A."/>
            <person name="Grewal N."/>
            <person name="Mulvaney E."/>
            <person name="Ryan E."/>
            <person name="Sun H."/>
            <person name="Florea L."/>
            <person name="Miller W."/>
            <person name="Stoneking T."/>
            <person name="Nhan M."/>
            <person name="Waterston R."/>
            <person name="Wilson R.K."/>
        </authorList>
    </citation>
    <scope>NUCLEOTIDE SEQUENCE [LARGE SCALE GENOMIC DNA]</scope>
    <source>
        <strain>LT2 / SGSC1412 / ATCC 700720</strain>
    </source>
</reference>
<name>MTGA_SALTY</name>
<evidence type="ECO:0000255" key="1">
    <source>
        <dbReference type="HAMAP-Rule" id="MF_00766"/>
    </source>
</evidence>
<accession>Q8ZLR7</accession>
<proteinExistence type="inferred from homology"/>
<gene>
    <name evidence="1" type="primary">mtgA</name>
    <name type="ordered locus">STM3326</name>
</gene>
<keyword id="KW-0997">Cell inner membrane</keyword>
<keyword id="KW-1003">Cell membrane</keyword>
<keyword id="KW-0133">Cell shape</keyword>
<keyword id="KW-0961">Cell wall biogenesis/degradation</keyword>
<keyword id="KW-0328">Glycosyltransferase</keyword>
<keyword id="KW-0472">Membrane</keyword>
<keyword id="KW-0573">Peptidoglycan synthesis</keyword>
<keyword id="KW-1185">Reference proteome</keyword>
<keyword id="KW-0808">Transferase</keyword>
<keyword id="KW-0812">Transmembrane</keyword>
<keyword id="KW-1133">Transmembrane helix</keyword>
<feature type="chain" id="PRO_0000083144" description="Biosynthetic peptidoglycan transglycosylase">
    <location>
        <begin position="1"/>
        <end position="242"/>
    </location>
</feature>
<feature type="transmembrane region" description="Helical" evidence="1">
    <location>
        <begin position="19"/>
        <end position="39"/>
    </location>
</feature>
<dbReference type="EC" id="2.4.99.28" evidence="1"/>
<dbReference type="EMBL" id="AE006468">
    <property type="protein sequence ID" value="AAL22195.1"/>
    <property type="molecule type" value="Genomic_DNA"/>
</dbReference>
<dbReference type="RefSeq" id="NP_462236.1">
    <property type="nucleotide sequence ID" value="NC_003197.2"/>
</dbReference>
<dbReference type="RefSeq" id="WP_000044652.1">
    <property type="nucleotide sequence ID" value="NC_003197.2"/>
</dbReference>
<dbReference type="SMR" id="Q8ZLR7"/>
<dbReference type="STRING" id="99287.STM3326"/>
<dbReference type="CAZy" id="GT51">
    <property type="family name" value="Glycosyltransferase Family 51"/>
</dbReference>
<dbReference type="PaxDb" id="99287-STM3326"/>
<dbReference type="DNASU" id="1254849"/>
<dbReference type="GeneID" id="1254849"/>
<dbReference type="KEGG" id="stm:STM3326"/>
<dbReference type="PATRIC" id="fig|99287.12.peg.3527"/>
<dbReference type="HOGENOM" id="CLU_006354_1_1_6"/>
<dbReference type="OMA" id="PAPKCFD"/>
<dbReference type="PhylomeDB" id="Q8ZLR7"/>
<dbReference type="BioCyc" id="SENT99287:STM3326-MONOMER"/>
<dbReference type="UniPathway" id="UPA00219"/>
<dbReference type="Proteomes" id="UP000001014">
    <property type="component" value="Chromosome"/>
</dbReference>
<dbReference type="GO" id="GO:0009274">
    <property type="term" value="C:peptidoglycan-based cell wall"/>
    <property type="evidence" value="ECO:0007669"/>
    <property type="project" value="InterPro"/>
</dbReference>
<dbReference type="GO" id="GO:0005886">
    <property type="term" value="C:plasma membrane"/>
    <property type="evidence" value="ECO:0000318"/>
    <property type="project" value="GO_Central"/>
</dbReference>
<dbReference type="GO" id="GO:0016763">
    <property type="term" value="F:pentosyltransferase activity"/>
    <property type="evidence" value="ECO:0007669"/>
    <property type="project" value="InterPro"/>
</dbReference>
<dbReference type="GO" id="GO:0008955">
    <property type="term" value="F:peptidoglycan glycosyltransferase activity"/>
    <property type="evidence" value="ECO:0000318"/>
    <property type="project" value="GO_Central"/>
</dbReference>
<dbReference type="GO" id="GO:0071555">
    <property type="term" value="P:cell wall organization"/>
    <property type="evidence" value="ECO:0007669"/>
    <property type="project" value="UniProtKB-KW"/>
</dbReference>
<dbReference type="GO" id="GO:0009252">
    <property type="term" value="P:peptidoglycan biosynthetic process"/>
    <property type="evidence" value="ECO:0000318"/>
    <property type="project" value="GO_Central"/>
</dbReference>
<dbReference type="GO" id="GO:0008360">
    <property type="term" value="P:regulation of cell shape"/>
    <property type="evidence" value="ECO:0007669"/>
    <property type="project" value="UniProtKB-KW"/>
</dbReference>
<dbReference type="Gene3D" id="1.10.3810.10">
    <property type="entry name" value="Biosynthetic peptidoglycan transglycosylase-like"/>
    <property type="match status" value="1"/>
</dbReference>
<dbReference type="HAMAP" id="MF_00766">
    <property type="entry name" value="PGT_MtgA"/>
    <property type="match status" value="1"/>
</dbReference>
<dbReference type="InterPro" id="IPR001264">
    <property type="entry name" value="Glyco_trans_51"/>
</dbReference>
<dbReference type="InterPro" id="IPR023346">
    <property type="entry name" value="Lysozyme-like_dom_sf"/>
</dbReference>
<dbReference type="InterPro" id="IPR036950">
    <property type="entry name" value="PBP_transglycosylase"/>
</dbReference>
<dbReference type="InterPro" id="IPR011812">
    <property type="entry name" value="Pep_trsgly"/>
</dbReference>
<dbReference type="NCBIfam" id="TIGR02070">
    <property type="entry name" value="mono_pep_trsgly"/>
    <property type="match status" value="1"/>
</dbReference>
<dbReference type="PANTHER" id="PTHR30400:SF0">
    <property type="entry name" value="BIOSYNTHETIC PEPTIDOGLYCAN TRANSGLYCOSYLASE"/>
    <property type="match status" value="1"/>
</dbReference>
<dbReference type="PANTHER" id="PTHR30400">
    <property type="entry name" value="MONOFUNCTIONAL BIOSYNTHETIC PEPTIDOGLYCAN TRANSGLYCOSYLASE"/>
    <property type="match status" value="1"/>
</dbReference>
<dbReference type="Pfam" id="PF00912">
    <property type="entry name" value="Transgly"/>
    <property type="match status" value="1"/>
</dbReference>
<dbReference type="SUPFAM" id="SSF53955">
    <property type="entry name" value="Lysozyme-like"/>
    <property type="match status" value="1"/>
</dbReference>
<comment type="function">
    <text evidence="1">Peptidoglycan polymerase that catalyzes glycan chain elongation from lipid-linked precursors.</text>
</comment>
<comment type="catalytic activity">
    <reaction evidence="1">
        <text>[GlcNAc-(1-&gt;4)-Mur2Ac(oyl-L-Ala-gamma-D-Glu-L-Lys-D-Ala-D-Ala)](n)-di-trans,octa-cis-undecaprenyl diphosphate + beta-D-GlcNAc-(1-&gt;4)-Mur2Ac(oyl-L-Ala-gamma-D-Glu-L-Lys-D-Ala-D-Ala)-di-trans,octa-cis-undecaprenyl diphosphate = [GlcNAc-(1-&gt;4)-Mur2Ac(oyl-L-Ala-gamma-D-Glu-L-Lys-D-Ala-D-Ala)](n+1)-di-trans,octa-cis-undecaprenyl diphosphate + di-trans,octa-cis-undecaprenyl diphosphate + H(+)</text>
        <dbReference type="Rhea" id="RHEA:23708"/>
        <dbReference type="Rhea" id="RHEA-COMP:9602"/>
        <dbReference type="Rhea" id="RHEA-COMP:9603"/>
        <dbReference type="ChEBI" id="CHEBI:15378"/>
        <dbReference type="ChEBI" id="CHEBI:58405"/>
        <dbReference type="ChEBI" id="CHEBI:60033"/>
        <dbReference type="ChEBI" id="CHEBI:78435"/>
        <dbReference type="EC" id="2.4.99.28"/>
    </reaction>
</comment>
<comment type="pathway">
    <text evidence="1">Cell wall biogenesis; peptidoglycan biosynthesis.</text>
</comment>
<comment type="subcellular location">
    <subcellularLocation>
        <location evidence="1">Cell inner membrane</location>
        <topology evidence="1">Single-pass membrane protein</topology>
    </subcellularLocation>
</comment>
<comment type="similarity">
    <text evidence="1">Belongs to the glycosyltransferase 51 family.</text>
</comment>
<sequence length="242" mass="27002">MSKRRIAPLTFLRRLLLRILAALAVFWGGGIALFSVVPVPFSAVMAERQISAWLGGEFGYVAHSDWVSMADISPWMGLAVIAAEDQKFPEHWGFDVPAIEKALAHNERNESRIRGASTLSQQTAKNLFLWDGRSWVRKGLEAGLTLGIETVWSKKRILTVYLNIAEFGDGIFGVEAAAQRYFHKPASRLSLSEAALLAAVLPNPIRYKANAPSGYVRSRQAWIMRQMRQLGGESFMTRNQLN</sequence>